<dbReference type="EC" id="1.2.1.12" evidence="1"/>
<dbReference type="EMBL" id="AE001439">
    <property type="protein sequence ID" value="AAD06436.1"/>
    <property type="molecule type" value="Genomic_DNA"/>
</dbReference>
<dbReference type="PIR" id="G71879">
    <property type="entry name" value="G71879"/>
</dbReference>
<dbReference type="RefSeq" id="WP_000688593.1">
    <property type="nucleotide sequence ID" value="NC_000921.1"/>
</dbReference>
<dbReference type="SMR" id="Q9ZKT0"/>
<dbReference type="KEGG" id="hpj:jhp_0855"/>
<dbReference type="PATRIC" id="fig|85963.30.peg.109"/>
<dbReference type="eggNOG" id="COG0057">
    <property type="taxonomic scope" value="Bacteria"/>
</dbReference>
<dbReference type="UniPathway" id="UPA00109">
    <property type="reaction ID" value="UER00184"/>
</dbReference>
<dbReference type="Proteomes" id="UP000000804">
    <property type="component" value="Chromosome"/>
</dbReference>
<dbReference type="GO" id="GO:0005737">
    <property type="term" value="C:cytoplasm"/>
    <property type="evidence" value="ECO:0007669"/>
    <property type="project" value="UniProtKB-SubCell"/>
</dbReference>
<dbReference type="GO" id="GO:0004365">
    <property type="term" value="F:glyceraldehyde-3-phosphate dehydrogenase (NAD+) (phosphorylating) activity"/>
    <property type="evidence" value="ECO:0000250"/>
    <property type="project" value="UniProtKB"/>
</dbReference>
<dbReference type="GO" id="GO:0051287">
    <property type="term" value="F:NAD binding"/>
    <property type="evidence" value="ECO:0000250"/>
    <property type="project" value="UniProtKB"/>
</dbReference>
<dbReference type="GO" id="GO:0050661">
    <property type="term" value="F:NADP binding"/>
    <property type="evidence" value="ECO:0007669"/>
    <property type="project" value="InterPro"/>
</dbReference>
<dbReference type="GO" id="GO:0006006">
    <property type="term" value="P:glucose metabolic process"/>
    <property type="evidence" value="ECO:0007669"/>
    <property type="project" value="InterPro"/>
</dbReference>
<dbReference type="GO" id="GO:0006096">
    <property type="term" value="P:glycolytic process"/>
    <property type="evidence" value="ECO:0007669"/>
    <property type="project" value="UniProtKB-UniPathway"/>
</dbReference>
<dbReference type="CDD" id="cd18126">
    <property type="entry name" value="GAPDH_I_C"/>
    <property type="match status" value="1"/>
</dbReference>
<dbReference type="CDD" id="cd05214">
    <property type="entry name" value="GAPDH_I_N"/>
    <property type="match status" value="1"/>
</dbReference>
<dbReference type="FunFam" id="3.30.360.10:FF:000002">
    <property type="entry name" value="Glyceraldehyde-3-phosphate dehydrogenase"/>
    <property type="match status" value="1"/>
</dbReference>
<dbReference type="Gene3D" id="3.30.360.10">
    <property type="entry name" value="Dihydrodipicolinate Reductase, domain 2"/>
    <property type="match status" value="1"/>
</dbReference>
<dbReference type="Gene3D" id="3.40.50.720">
    <property type="entry name" value="NAD(P)-binding Rossmann-like Domain"/>
    <property type="match status" value="1"/>
</dbReference>
<dbReference type="InterPro" id="IPR020831">
    <property type="entry name" value="GlycerAld/Erythrose_P_DH"/>
</dbReference>
<dbReference type="InterPro" id="IPR020830">
    <property type="entry name" value="GlycerAld_3-P_DH_AS"/>
</dbReference>
<dbReference type="InterPro" id="IPR020829">
    <property type="entry name" value="GlycerAld_3-P_DH_cat"/>
</dbReference>
<dbReference type="InterPro" id="IPR020828">
    <property type="entry name" value="GlycerAld_3-P_DH_NAD(P)-bd"/>
</dbReference>
<dbReference type="InterPro" id="IPR006424">
    <property type="entry name" value="Glyceraldehyde-3-P_DH_1"/>
</dbReference>
<dbReference type="InterPro" id="IPR036291">
    <property type="entry name" value="NAD(P)-bd_dom_sf"/>
</dbReference>
<dbReference type="NCBIfam" id="TIGR01534">
    <property type="entry name" value="GAPDH-I"/>
    <property type="match status" value="1"/>
</dbReference>
<dbReference type="PANTHER" id="PTHR43148">
    <property type="entry name" value="GLYCERALDEHYDE-3-PHOSPHATE DEHYDROGENASE 2"/>
    <property type="match status" value="1"/>
</dbReference>
<dbReference type="Pfam" id="PF02800">
    <property type="entry name" value="Gp_dh_C"/>
    <property type="match status" value="1"/>
</dbReference>
<dbReference type="Pfam" id="PF00044">
    <property type="entry name" value="Gp_dh_N"/>
    <property type="match status" value="1"/>
</dbReference>
<dbReference type="PIRSF" id="PIRSF000149">
    <property type="entry name" value="GAP_DH"/>
    <property type="match status" value="1"/>
</dbReference>
<dbReference type="PRINTS" id="PR00078">
    <property type="entry name" value="G3PDHDRGNASE"/>
</dbReference>
<dbReference type="SMART" id="SM00846">
    <property type="entry name" value="Gp_dh_N"/>
    <property type="match status" value="1"/>
</dbReference>
<dbReference type="SUPFAM" id="SSF55347">
    <property type="entry name" value="Glyceraldehyde-3-phosphate dehydrogenase-like, C-terminal domain"/>
    <property type="match status" value="1"/>
</dbReference>
<dbReference type="SUPFAM" id="SSF51735">
    <property type="entry name" value="NAD(P)-binding Rossmann-fold domains"/>
    <property type="match status" value="1"/>
</dbReference>
<dbReference type="PROSITE" id="PS00071">
    <property type="entry name" value="GAPDH"/>
    <property type="match status" value="1"/>
</dbReference>
<organism>
    <name type="scientific">Helicobacter pylori (strain J99 / ATCC 700824)</name>
    <name type="common">Campylobacter pylori J99</name>
    <dbReference type="NCBI Taxonomy" id="85963"/>
    <lineage>
        <taxon>Bacteria</taxon>
        <taxon>Pseudomonadati</taxon>
        <taxon>Campylobacterota</taxon>
        <taxon>Epsilonproteobacteria</taxon>
        <taxon>Campylobacterales</taxon>
        <taxon>Helicobacteraceae</taxon>
        <taxon>Helicobacter</taxon>
    </lineage>
</organism>
<evidence type="ECO:0000250" key="1">
    <source>
        <dbReference type="UniProtKB" id="P0A9B2"/>
    </source>
</evidence>
<evidence type="ECO:0000305" key="2"/>
<comment type="function">
    <text evidence="1">Catalyzes the oxidative phosphorylation of glyceraldehyde 3-phosphate (G3P) to 1,3-bisphosphoglycerate (BPG) using the cofactor NAD. The first reaction step involves the formation of a hemiacetal intermediate between G3P and a cysteine residue, and this hemiacetal intermediate is then oxidized to a thioester, with concomitant reduction of NAD to NADH. The reduced NADH is then exchanged with the second NAD, and the thioester is attacked by a nucleophilic inorganic phosphate to produce BPG.</text>
</comment>
<comment type="catalytic activity">
    <reaction evidence="1">
        <text>D-glyceraldehyde 3-phosphate + phosphate + NAD(+) = (2R)-3-phospho-glyceroyl phosphate + NADH + H(+)</text>
        <dbReference type="Rhea" id="RHEA:10300"/>
        <dbReference type="ChEBI" id="CHEBI:15378"/>
        <dbReference type="ChEBI" id="CHEBI:43474"/>
        <dbReference type="ChEBI" id="CHEBI:57540"/>
        <dbReference type="ChEBI" id="CHEBI:57604"/>
        <dbReference type="ChEBI" id="CHEBI:57945"/>
        <dbReference type="ChEBI" id="CHEBI:59776"/>
        <dbReference type="EC" id="1.2.1.12"/>
    </reaction>
</comment>
<comment type="pathway">
    <text evidence="2">Carbohydrate degradation; glycolysis; pyruvate from D-glyceraldehyde 3-phosphate: step 1/5.</text>
</comment>
<comment type="subunit">
    <text evidence="1">Homotetramer.</text>
</comment>
<comment type="subcellular location">
    <subcellularLocation>
        <location evidence="2">Cytoplasm</location>
    </subcellularLocation>
</comment>
<comment type="similarity">
    <text evidence="2">Belongs to the glyceraldehyde-3-phosphate dehydrogenase family.</text>
</comment>
<proteinExistence type="inferred from homology"/>
<feature type="chain" id="PRO_0000145663" description="Glyceraldehyde-3-phosphate dehydrogenase">
    <location>
        <begin position="1"/>
        <end position="332"/>
    </location>
</feature>
<feature type="active site" description="Nucleophile" evidence="1">
    <location>
        <position position="151"/>
    </location>
</feature>
<feature type="binding site" evidence="1">
    <location>
        <begin position="10"/>
        <end position="11"/>
    </location>
    <ligand>
        <name>NAD(+)</name>
        <dbReference type="ChEBI" id="CHEBI:57540"/>
    </ligand>
</feature>
<feature type="binding site" evidence="1">
    <location>
        <position position="36"/>
    </location>
    <ligand>
        <name>NAD(+)</name>
        <dbReference type="ChEBI" id="CHEBI:57540"/>
    </ligand>
</feature>
<feature type="binding site" evidence="1">
    <location>
        <position position="81"/>
    </location>
    <ligand>
        <name>NAD(+)</name>
        <dbReference type="ChEBI" id="CHEBI:57540"/>
    </ligand>
</feature>
<feature type="binding site" evidence="1">
    <location>
        <position position="116"/>
    </location>
    <ligand>
        <name>NAD(+)</name>
        <dbReference type="ChEBI" id="CHEBI:57540"/>
    </ligand>
</feature>
<feature type="binding site" evidence="1">
    <location>
        <begin position="150"/>
        <end position="152"/>
    </location>
    <ligand>
        <name>D-glyceraldehyde 3-phosphate</name>
        <dbReference type="ChEBI" id="CHEBI:59776"/>
    </ligand>
</feature>
<feature type="binding site" evidence="1">
    <location>
        <position position="181"/>
    </location>
    <ligand>
        <name>D-glyceraldehyde 3-phosphate</name>
        <dbReference type="ChEBI" id="CHEBI:59776"/>
    </ligand>
</feature>
<feature type="binding site" evidence="1">
    <location>
        <position position="197"/>
    </location>
    <ligand>
        <name>D-glyceraldehyde 3-phosphate</name>
        <dbReference type="ChEBI" id="CHEBI:59776"/>
    </ligand>
</feature>
<feature type="binding site" evidence="1">
    <location>
        <begin position="210"/>
        <end position="211"/>
    </location>
    <ligand>
        <name>D-glyceraldehyde 3-phosphate</name>
        <dbReference type="ChEBI" id="CHEBI:59776"/>
    </ligand>
</feature>
<feature type="binding site" evidence="1">
    <location>
        <position position="233"/>
    </location>
    <ligand>
        <name>D-glyceraldehyde 3-phosphate</name>
        <dbReference type="ChEBI" id="CHEBI:59776"/>
    </ligand>
</feature>
<feature type="binding site" evidence="1">
    <location>
        <position position="314"/>
    </location>
    <ligand>
        <name>NAD(+)</name>
        <dbReference type="ChEBI" id="CHEBI:57540"/>
    </ligand>
</feature>
<feature type="site" description="Activates thiol group during catalysis" evidence="1">
    <location>
        <position position="178"/>
    </location>
</feature>
<keyword id="KW-0963">Cytoplasm</keyword>
<keyword id="KW-0324">Glycolysis</keyword>
<keyword id="KW-0520">NAD</keyword>
<keyword id="KW-0547">Nucleotide-binding</keyword>
<keyword id="KW-0560">Oxidoreductase</keyword>
<sequence>MKIFINGFGRIGRCVLRAILERNDTNPQLEVIGINDPANWEILAYLLEHDSTHGLLNKEVRYSNGKLIIGSLEIPVFNSIKDLKGVGVIIECSGKFLEPKTLENYLLLGAKKVLLSAPFMGEYDEKQYPTLVYGVNHFLYQNQAIVSNASCTTNAIAPICAILDKAFSIKEGMLTTIHSYTSDQKLIDLAHPLDKRRSRAAASNIIPTTTKAALALHKVLPNLKNKMHGHSVRVPSLDVSMIDLSLFLEKKALKDPINDLLITASKGTLKGVLEIDLKERVSSDFISNPNSVIIAPDLTFTLENMVKIMGWYDNEWGYSNRLVDMAQFMYHY</sequence>
<reference key="1">
    <citation type="journal article" date="1999" name="Nature">
        <title>Genomic sequence comparison of two unrelated isolates of the human gastric pathogen Helicobacter pylori.</title>
        <authorList>
            <person name="Alm R.A."/>
            <person name="Ling L.-S.L."/>
            <person name="Moir D.T."/>
            <person name="King B.L."/>
            <person name="Brown E.D."/>
            <person name="Doig P.C."/>
            <person name="Smith D.R."/>
            <person name="Noonan B."/>
            <person name="Guild B.C."/>
            <person name="deJonge B.L."/>
            <person name="Carmel G."/>
            <person name="Tummino P.J."/>
            <person name="Caruso A."/>
            <person name="Uria-Nickelsen M."/>
            <person name="Mills D.M."/>
            <person name="Ives C."/>
            <person name="Gibson R."/>
            <person name="Merberg D."/>
            <person name="Mills S.D."/>
            <person name="Jiang Q."/>
            <person name="Taylor D.E."/>
            <person name="Vovis G.F."/>
            <person name="Trust T.J."/>
        </authorList>
    </citation>
    <scope>NUCLEOTIDE SEQUENCE [LARGE SCALE GENOMIC DNA]</scope>
    <source>
        <strain>J99 / ATCC 700824</strain>
    </source>
</reference>
<protein>
    <recommendedName>
        <fullName evidence="1">Glyceraldehyde-3-phosphate dehydrogenase</fullName>
        <shortName evidence="1">GAPDH</shortName>
        <ecNumber evidence="1">1.2.1.12</ecNumber>
    </recommendedName>
    <alternativeName>
        <fullName evidence="1">NAD-dependent glyceraldehyde-3-phosphate dehydrogenase</fullName>
    </alternativeName>
</protein>
<accession>Q9ZKT0</accession>
<name>G3P_HELPJ</name>
<gene>
    <name type="primary">gapA</name>
    <name type="synonym">gap</name>
    <name type="ordered locus">jhp_0855</name>
</gene>